<keyword id="KW-0130">Cell adhesion</keyword>
<keyword id="KW-1003">Cell membrane</keyword>
<keyword id="KW-1015">Disulfide bond</keyword>
<keyword id="KW-0325">Glycoprotein</keyword>
<keyword id="KW-0375">Hydrogen ion transport</keyword>
<keyword id="KW-0406">Ion transport</keyword>
<keyword id="KW-0472">Membrane</keyword>
<keyword id="KW-0630">Potassium</keyword>
<keyword id="KW-0633">Potassium transport</keyword>
<keyword id="KW-1185">Reference proteome</keyword>
<keyword id="KW-0735">Signal-anchor</keyword>
<keyword id="KW-0812">Transmembrane</keyword>
<keyword id="KW-1133">Transmembrane helix</keyword>
<keyword id="KW-0813">Transport</keyword>
<comment type="function">
    <text evidence="3 4">The beta subunit of the gastric H(+)/K(+) ATPase pump which transports H(+) ions in exchange for K(+) ions across the apical membrane of parietal cells. Plays a structural and regulatory role in the assembly and membrane targeting of a functionally active pump (By similarity). Within a transport cycle, the transfer of a H(+) ion across the membrane is coupled to ATP hydrolysis and is associated with a transient phosphorylation of the alpha subunit that shifts the pump conformation from inward-facing (E1) to outward-facing state (E2). Interacts with the phosphorylation domain of the alpha subunit and functions as a ratchet, stabilizing the lumenal-open E2 conformation and preventing the reverse reaction of the transport cycle (By similarity).</text>
</comment>
<comment type="subunit">
    <text evidence="2 3">The ATPase pump is composed of two subunits: alpha (catalytic) and beta (regulatory). Interacts with alpha subunit ATP12A; this interaction is required for the formation of a functionally active pump and targeting at the plasma membrane (By similarity). Interacts (via N-terminus) with alpha subunit ATP4A (via the P-domain) (By similarity).</text>
</comment>
<comment type="subcellular location">
    <subcellularLocation>
        <location evidence="5">Apical cell membrane</location>
        <topology evidence="7">Single-pass type II membrane protein</topology>
    </subcellularLocation>
    <subcellularLocation>
        <location evidence="3">Cell membrane</location>
        <topology evidence="7">Single-pass type II membrane protein</topology>
    </subcellularLocation>
    <text evidence="5">Localized in the apical canalicular membrane of parietal cells.</text>
</comment>
<comment type="tissue specificity">
    <text evidence="8">Stomach.</text>
</comment>
<comment type="domain">
    <text evidence="6">The C-terminal lobe folds into an immunoglobulin-like domain and mediates cell adhesion properties.</text>
</comment>
<comment type="PTM">
    <text evidence="3">N-glycosylation is necessary for assembly and functional expression of the pump at the plasma membrane.</text>
</comment>
<comment type="similarity">
    <text evidence="9">Belongs to the X(+)/potassium ATPases subunit beta family.</text>
</comment>
<proteinExistence type="evidence at transcript level"/>
<organism>
    <name type="scientific">Rattus norvegicus</name>
    <name type="common">Rat</name>
    <dbReference type="NCBI Taxonomy" id="10116"/>
    <lineage>
        <taxon>Eukaryota</taxon>
        <taxon>Metazoa</taxon>
        <taxon>Chordata</taxon>
        <taxon>Craniata</taxon>
        <taxon>Vertebrata</taxon>
        <taxon>Euteleostomi</taxon>
        <taxon>Mammalia</taxon>
        <taxon>Eutheria</taxon>
        <taxon>Euarchontoglires</taxon>
        <taxon>Glires</taxon>
        <taxon>Rodentia</taxon>
        <taxon>Myomorpha</taxon>
        <taxon>Muroidea</taxon>
        <taxon>Muridae</taxon>
        <taxon>Murinae</taxon>
        <taxon>Rattus</taxon>
    </lineage>
</organism>
<evidence type="ECO:0000250" key="1"/>
<evidence type="ECO:0000250" key="2">
    <source>
        <dbReference type="UniProtKB" id="P18434"/>
    </source>
</evidence>
<evidence type="ECO:0000250" key="3">
    <source>
        <dbReference type="UniProtKB" id="P18597"/>
    </source>
</evidence>
<evidence type="ECO:0000250" key="4">
    <source>
        <dbReference type="UniProtKB" id="P19156"/>
    </source>
</evidence>
<evidence type="ECO:0000250" key="5">
    <source>
        <dbReference type="UniProtKB" id="P20648"/>
    </source>
</evidence>
<evidence type="ECO:0000250" key="6">
    <source>
        <dbReference type="UniProtKB" id="P51164"/>
    </source>
</evidence>
<evidence type="ECO:0000255" key="7"/>
<evidence type="ECO:0000269" key="8">
    <source>
    </source>
</evidence>
<evidence type="ECO:0000305" key="9"/>
<protein>
    <recommendedName>
        <fullName>Potassium-transporting ATPase subunit beta</fullName>
    </recommendedName>
    <alternativeName>
        <fullName>Gastric H(+)/K(+) ATPase subunit beta</fullName>
    </alternativeName>
    <alternativeName>
        <fullName>Proton pump beta chain</fullName>
    </alternativeName>
</protein>
<feature type="chain" id="PRO_0000219095" description="Potassium-transporting ATPase subunit beta">
    <location>
        <begin position="1"/>
        <end position="294"/>
    </location>
</feature>
<feature type="topological domain" description="Cytoplasmic" evidence="7">
    <location>
        <begin position="1"/>
        <end position="36"/>
    </location>
</feature>
<feature type="transmembrane region" description="Helical; Signal-anchor for type II membrane protein" evidence="7">
    <location>
        <begin position="37"/>
        <end position="57"/>
    </location>
</feature>
<feature type="topological domain" description="Extracellular" evidence="7">
    <location>
        <begin position="58"/>
        <end position="294"/>
    </location>
</feature>
<feature type="region of interest" description="immunoglobulin-like" evidence="1">
    <location>
        <begin position="194"/>
        <end position="294"/>
    </location>
</feature>
<feature type="glycosylation site" description="N-linked (GlcNAc...) asparagine" evidence="3">
    <location>
        <position position="99"/>
    </location>
</feature>
<feature type="glycosylation site" description="N-linked (GlcNAc...) asparagine" evidence="3">
    <location>
        <position position="103"/>
    </location>
</feature>
<feature type="glycosylation site" description="N-linked (GlcNAc...) asparagine" evidence="3">
    <location>
        <position position="130"/>
    </location>
</feature>
<feature type="glycosylation site" description="N-linked (GlcNAc...) asparagine" evidence="3">
    <location>
        <position position="146"/>
    </location>
</feature>
<feature type="glycosylation site" description="N-linked (GlcNAc...) asparagine" evidence="3">
    <location>
        <position position="161"/>
    </location>
</feature>
<feature type="glycosylation site" description="N-linked (GlcNAc...) asparagine" evidence="3">
    <location>
        <position position="193"/>
    </location>
</feature>
<feature type="glycosylation site" description="N-linked (GlcNAc...) asparagine" evidence="3">
    <location>
        <position position="225"/>
    </location>
</feature>
<feature type="disulfide bond" evidence="2">
    <location>
        <begin position="131"/>
        <end position="152"/>
    </location>
</feature>
<feature type="disulfide bond" evidence="2">
    <location>
        <begin position="162"/>
        <end position="178"/>
    </location>
</feature>
<feature type="disulfide bond" evidence="2">
    <location>
        <begin position="201"/>
        <end position="266"/>
    </location>
</feature>
<feature type="sequence conflict" description="In Ref. 1; AAA41330." evidence="9" ref="1">
    <original>Y</original>
    <variation>H</variation>
    <location>
        <position position="136"/>
    </location>
</feature>
<reference key="1">
    <citation type="journal article" date="1990" name="J. Biol. Chem.">
        <title>cDNA cloning of the beta-subunit of the rat gastric H,K-ATPase.</title>
        <authorList>
            <person name="Shull G.E."/>
        </authorList>
    </citation>
    <scope>NUCLEOTIDE SEQUENCE [MRNA]</scope>
    <scope>TISSUE SPECIFICITY</scope>
    <source>
        <tissue>Stomach</tissue>
    </source>
</reference>
<reference key="2">
    <citation type="journal article" date="1991" name="Genomics">
        <title>Rat gastric H,K-ATPase beta-subunit gene: intron/exon organization, identification of multiple transcription initiation sites, and analysis of the 5'-flanking region.</title>
        <authorList>
            <person name="Newman P.R."/>
            <person name="Shull G.E."/>
        </authorList>
    </citation>
    <scope>NUCLEOTIDE SEQUENCE [MRNA]</scope>
</reference>
<reference key="3">
    <citation type="journal article" date="1990" name="J. Biol. Chem.">
        <title>Cloning of the H,K-ATPase beta subunit. Tissue-specific expression, chromosomal assignment, and relationship to Na,K-ATPase beta subunits.</title>
        <authorList>
            <person name="Canfield V.A."/>
            <person name="Okamoto C.T."/>
            <person name="Chow D."/>
            <person name="Dorfman J."/>
            <person name="Gros P."/>
            <person name="Forte J.G."/>
            <person name="Levenson R."/>
        </authorList>
    </citation>
    <scope>NUCLEOTIDE SEQUENCE [MRNA]</scope>
    <source>
        <tissue>Gastric mucosa</tissue>
    </source>
</reference>
<reference key="4">
    <citation type="journal article" date="1991" name="J. Biol. Chem.">
        <title>The rat H+/K(+)-ATPase beta subunit gene and recognition of its control region by gastric DNA binding protein.</title>
        <authorList>
            <person name="Maeda M."/>
            <person name="Oshiman K.I."/>
            <person name="Tamura S."/>
            <person name="Kaya S."/>
            <person name="Mahmood S."/>
            <person name="Reuben M.A."/>
            <person name="Lasater L.S."/>
            <person name="Sachs G."/>
            <person name="Futai M."/>
        </authorList>
    </citation>
    <scope>NUCLEOTIDE SEQUENCE</scope>
</reference>
<gene>
    <name type="primary">Atp4b</name>
</gene>
<dbReference type="EMBL" id="L34666">
    <property type="protein sequence ID" value="AAA41332.1"/>
    <property type="molecule type" value="Genomic_DNA"/>
</dbReference>
<dbReference type="EMBL" id="L34661">
    <property type="protein sequence ID" value="AAA41332.1"/>
    <property type="status" value="JOINED"/>
    <property type="molecule type" value="Genomic_DNA"/>
</dbReference>
<dbReference type="EMBL" id="L34662">
    <property type="protein sequence ID" value="AAA41332.1"/>
    <property type="status" value="JOINED"/>
    <property type="molecule type" value="Genomic_DNA"/>
</dbReference>
<dbReference type="EMBL" id="L34663">
    <property type="protein sequence ID" value="AAA41332.1"/>
    <property type="status" value="JOINED"/>
    <property type="molecule type" value="Genomic_DNA"/>
</dbReference>
<dbReference type="EMBL" id="L34664">
    <property type="protein sequence ID" value="AAA41332.1"/>
    <property type="status" value="JOINED"/>
    <property type="molecule type" value="Genomic_DNA"/>
</dbReference>
<dbReference type="EMBL" id="L34665">
    <property type="protein sequence ID" value="AAA41332.1"/>
    <property type="status" value="JOINED"/>
    <property type="molecule type" value="Genomic_DNA"/>
</dbReference>
<dbReference type="EMBL" id="S76404">
    <property type="protein sequence ID" value="AAB21120.1"/>
    <property type="molecule type" value="Genomic_DNA"/>
</dbReference>
<dbReference type="EMBL" id="M55655">
    <property type="protein sequence ID" value="AAA41330.1"/>
    <property type="molecule type" value="mRNA"/>
</dbReference>
<dbReference type="EMBL" id="M35535">
    <property type="protein sequence ID" value="AAA63482.1"/>
    <property type="molecule type" value="mRNA"/>
</dbReference>
<dbReference type="PIR" id="A41199">
    <property type="entry name" value="A41199"/>
</dbReference>
<dbReference type="RefSeq" id="NP_036642.2">
    <property type="nucleotide sequence ID" value="NM_012510.2"/>
</dbReference>
<dbReference type="SMR" id="P18598"/>
<dbReference type="ComplexPortal" id="CPX-2183">
    <property type="entry name" value="Hydrogen:potassium-exchanging ATPase complex"/>
</dbReference>
<dbReference type="FunCoup" id="P18598">
    <property type="interactions" value="6"/>
</dbReference>
<dbReference type="STRING" id="10116.ENSRNOP00000025957"/>
<dbReference type="BindingDB" id="P18598"/>
<dbReference type="ChEMBL" id="CHEMBL4771"/>
<dbReference type="GlyCosmos" id="P18598">
    <property type="glycosylation" value="7 sites, No reported glycans"/>
</dbReference>
<dbReference type="GlyGen" id="P18598">
    <property type="glycosylation" value="7 sites"/>
</dbReference>
<dbReference type="iPTMnet" id="P18598"/>
<dbReference type="PhosphoSitePlus" id="P18598"/>
<dbReference type="PaxDb" id="10116-ENSRNOP00000025957"/>
<dbReference type="Ensembl" id="ENSRNOT00000025958.3">
    <property type="protein sequence ID" value="ENSRNOP00000025957.1"/>
    <property type="gene ID" value="ENSRNOG00000018543.5"/>
</dbReference>
<dbReference type="GeneID" id="24217"/>
<dbReference type="KEGG" id="rno:24217"/>
<dbReference type="UCSC" id="RGD:2178">
    <property type="organism name" value="rat"/>
</dbReference>
<dbReference type="AGR" id="RGD:2178"/>
<dbReference type="CTD" id="496"/>
<dbReference type="RGD" id="2178">
    <property type="gene designation" value="Atp4b"/>
</dbReference>
<dbReference type="eggNOG" id="KOG3927">
    <property type="taxonomic scope" value="Eukaryota"/>
</dbReference>
<dbReference type="GeneTree" id="ENSGT01030000234579"/>
<dbReference type="HOGENOM" id="CLU_057702_1_1_1"/>
<dbReference type="InParanoid" id="P18598"/>
<dbReference type="OMA" id="APRVNCT"/>
<dbReference type="OrthoDB" id="5912413at2759"/>
<dbReference type="PhylomeDB" id="P18598"/>
<dbReference type="TreeFam" id="TF314618"/>
<dbReference type="Reactome" id="R-RNO-936837">
    <property type="pathway name" value="Ion transport by P-type ATPases"/>
</dbReference>
<dbReference type="PRO" id="PR:P18598"/>
<dbReference type="Proteomes" id="UP000002494">
    <property type="component" value="Chromosome 16"/>
</dbReference>
<dbReference type="Bgee" id="ENSRNOG00000018543">
    <property type="expression patterns" value="Expressed in stomach and 13 other cell types or tissues"/>
</dbReference>
<dbReference type="GO" id="GO:0016324">
    <property type="term" value="C:apical plasma membrane"/>
    <property type="evidence" value="ECO:0007669"/>
    <property type="project" value="UniProtKB-SubCell"/>
</dbReference>
<dbReference type="GO" id="GO:0005889">
    <property type="term" value="C:potassium:proton exchanging ATPase complex"/>
    <property type="evidence" value="ECO:0000266"/>
    <property type="project" value="RGD"/>
</dbReference>
<dbReference type="GO" id="GO:0005890">
    <property type="term" value="C:sodium:potassium-exchanging ATPase complex"/>
    <property type="evidence" value="ECO:0000318"/>
    <property type="project" value="GO_Central"/>
</dbReference>
<dbReference type="GO" id="GO:0001671">
    <property type="term" value="F:ATPase activator activity"/>
    <property type="evidence" value="ECO:0000318"/>
    <property type="project" value="GO_Central"/>
</dbReference>
<dbReference type="GO" id="GO:0007155">
    <property type="term" value="P:cell adhesion"/>
    <property type="evidence" value="ECO:0007669"/>
    <property type="project" value="UniProtKB-KW"/>
</dbReference>
<dbReference type="GO" id="GO:0030007">
    <property type="term" value="P:intracellular potassium ion homeostasis"/>
    <property type="evidence" value="ECO:0000318"/>
    <property type="project" value="GO_Central"/>
</dbReference>
<dbReference type="GO" id="GO:0006883">
    <property type="term" value="P:intracellular sodium ion homeostasis"/>
    <property type="evidence" value="ECO:0000318"/>
    <property type="project" value="GO_Central"/>
</dbReference>
<dbReference type="GO" id="GO:0045851">
    <property type="term" value="P:pH reduction"/>
    <property type="evidence" value="ECO:0000315"/>
    <property type="project" value="RGD"/>
</dbReference>
<dbReference type="GO" id="GO:1990573">
    <property type="term" value="P:potassium ion import across plasma membrane"/>
    <property type="evidence" value="ECO:0000318"/>
    <property type="project" value="GO_Central"/>
</dbReference>
<dbReference type="GO" id="GO:0071805">
    <property type="term" value="P:potassium ion transmembrane transport"/>
    <property type="evidence" value="ECO:0000266"/>
    <property type="project" value="RGD"/>
</dbReference>
<dbReference type="GO" id="GO:1902600">
    <property type="term" value="P:proton transmembrane transport"/>
    <property type="evidence" value="ECO:0007669"/>
    <property type="project" value="UniProtKB-KW"/>
</dbReference>
<dbReference type="GO" id="GO:0032496">
    <property type="term" value="P:response to lipopolysaccharide"/>
    <property type="evidence" value="ECO:0000270"/>
    <property type="project" value="RGD"/>
</dbReference>
<dbReference type="GO" id="GO:0036376">
    <property type="term" value="P:sodium ion export across plasma membrane"/>
    <property type="evidence" value="ECO:0000318"/>
    <property type="project" value="GO_Central"/>
</dbReference>
<dbReference type="FunFam" id="1.20.5.170:FF:000061">
    <property type="entry name" value="Sodium/potassium-transporting ATPase subunit beta"/>
    <property type="match status" value="1"/>
</dbReference>
<dbReference type="FunFam" id="2.60.40.1660:FF:000006">
    <property type="entry name" value="Sodium/potassium-transporting ATPase subunit beta"/>
    <property type="match status" value="1"/>
</dbReference>
<dbReference type="Gene3D" id="1.20.5.170">
    <property type="match status" value="1"/>
</dbReference>
<dbReference type="Gene3D" id="2.60.40.1660">
    <property type="entry name" value="Na, k-atpase alpha subunit"/>
    <property type="match status" value="1"/>
</dbReference>
<dbReference type="InterPro" id="IPR000402">
    <property type="entry name" value="Na/K_ATPase_sub_beta"/>
</dbReference>
<dbReference type="InterPro" id="IPR038702">
    <property type="entry name" value="Na/K_ATPase_sub_beta_sf"/>
</dbReference>
<dbReference type="NCBIfam" id="TIGR01107">
    <property type="entry name" value="Na_K_ATPase_bet"/>
    <property type="match status" value="1"/>
</dbReference>
<dbReference type="PANTHER" id="PTHR11523:SF11">
    <property type="entry name" value="POTASSIUM-TRANSPORTING ATPASE SUBUNIT BETA"/>
    <property type="match status" value="1"/>
</dbReference>
<dbReference type="PANTHER" id="PTHR11523">
    <property type="entry name" value="SODIUM/POTASSIUM-DEPENDENT ATPASE BETA SUBUNIT"/>
    <property type="match status" value="1"/>
</dbReference>
<dbReference type="Pfam" id="PF00287">
    <property type="entry name" value="Na_K-ATPase"/>
    <property type="match status" value="1"/>
</dbReference>
<dbReference type="PROSITE" id="PS00390">
    <property type="entry name" value="ATPASE_NA_K_BETA_1"/>
    <property type="match status" value="1"/>
</dbReference>
<dbReference type="PROSITE" id="PS00391">
    <property type="entry name" value="ATPASE_NA_K_BETA_2"/>
    <property type="match status" value="1"/>
</dbReference>
<name>ATP4B_RAT</name>
<sequence>MAALQEKKSCSQRMAEFRQYCWNPDTGQMLGRTPARWVWISLYYAAFYVVMTGLFALCIYVLMQTIDPYTPDYQDQLKSPGVTLRPDVYGERGLQISYNISENSSWAGLTHTLHSFLAGYTPASQQDSINCSSEKYFFQETFSAPNHTKFSCKFTADMLQNCSGLVDPSFGFEEGKPCFIIKMNRIVKFLPSNNTAPRVDCTFQDDPQKPRKDIEPLQVQYYPPNGTFSLHYFPYYGKKAQPHYSNPLVAAKFLNVPKNTQVLIVCKIMADHVTFDNPHDPYEGKVEFKLTIQK</sequence>
<accession>P18598</accession>